<gene>
    <name evidence="1" type="primary">hrcA</name>
    <name type="ordered locus">USA300HOU_1583</name>
</gene>
<protein>
    <recommendedName>
        <fullName evidence="1">Heat-inducible transcription repressor HrcA</fullName>
    </recommendedName>
</protein>
<sequence>MITDRQLSILNAIVEDYVDFGQPVGSKTLIERHNLNVSPATIRNEMKQLEDLNYIEKTHSSSGRSPSQLGFRYYVNRLLEQTSHQKTNKLRRLNQLLVENQYDVSSALTYFADELSNISQYTTLVVHPNHKQDIINNVHLIRANPNLVIMVIVFSSGHVEHVHLASDIPFNNDKLNTISNFVTNKLTEFNQNLQDDIVSFVQSEQEEIFINKLLNTMNNHISNQSNSIYMGGKVKLIDALNESNVSSIQPILQYIESNRIAELLQDISSPNINVKIGNEIDDSLSDISIVTSQYHFDETLKGQIAVIGPTAMHYQNVIQLLNRIW</sequence>
<dbReference type="EMBL" id="CP000730">
    <property type="protein sequence ID" value="ABX29590.1"/>
    <property type="molecule type" value="Genomic_DNA"/>
</dbReference>
<dbReference type="RefSeq" id="WP_000627140.1">
    <property type="nucleotide sequence ID" value="NC_010079.1"/>
</dbReference>
<dbReference type="SMR" id="A8Z4C1"/>
<dbReference type="KEGG" id="sax:USA300HOU_1583"/>
<dbReference type="HOGENOM" id="CLU_050019_1_0_9"/>
<dbReference type="GO" id="GO:0003677">
    <property type="term" value="F:DNA binding"/>
    <property type="evidence" value="ECO:0007669"/>
    <property type="project" value="InterPro"/>
</dbReference>
<dbReference type="GO" id="GO:0045892">
    <property type="term" value="P:negative regulation of DNA-templated transcription"/>
    <property type="evidence" value="ECO:0007669"/>
    <property type="project" value="UniProtKB-UniRule"/>
</dbReference>
<dbReference type="FunFam" id="1.10.10.10:FF:000049">
    <property type="entry name" value="Heat-inducible transcription repressor HrcA"/>
    <property type="match status" value="1"/>
</dbReference>
<dbReference type="Gene3D" id="3.30.450.40">
    <property type="match status" value="1"/>
</dbReference>
<dbReference type="Gene3D" id="3.30.390.60">
    <property type="entry name" value="Heat-inducible transcription repressor hrca homolog, domain 3"/>
    <property type="match status" value="1"/>
</dbReference>
<dbReference type="Gene3D" id="1.10.10.10">
    <property type="entry name" value="Winged helix-like DNA-binding domain superfamily/Winged helix DNA-binding domain"/>
    <property type="match status" value="1"/>
</dbReference>
<dbReference type="HAMAP" id="MF_00081">
    <property type="entry name" value="HrcA"/>
    <property type="match status" value="1"/>
</dbReference>
<dbReference type="InterPro" id="IPR029016">
    <property type="entry name" value="GAF-like_dom_sf"/>
</dbReference>
<dbReference type="InterPro" id="IPR002571">
    <property type="entry name" value="HrcA"/>
</dbReference>
<dbReference type="InterPro" id="IPR021153">
    <property type="entry name" value="HrcA_C"/>
</dbReference>
<dbReference type="InterPro" id="IPR036388">
    <property type="entry name" value="WH-like_DNA-bd_sf"/>
</dbReference>
<dbReference type="InterPro" id="IPR036390">
    <property type="entry name" value="WH_DNA-bd_sf"/>
</dbReference>
<dbReference type="InterPro" id="IPR023120">
    <property type="entry name" value="WHTH_transcript_rep_HrcA_IDD"/>
</dbReference>
<dbReference type="NCBIfam" id="TIGR00331">
    <property type="entry name" value="hrcA"/>
    <property type="match status" value="1"/>
</dbReference>
<dbReference type="PANTHER" id="PTHR34824">
    <property type="entry name" value="HEAT-INDUCIBLE TRANSCRIPTION REPRESSOR HRCA"/>
    <property type="match status" value="1"/>
</dbReference>
<dbReference type="PANTHER" id="PTHR34824:SF1">
    <property type="entry name" value="HEAT-INDUCIBLE TRANSCRIPTION REPRESSOR HRCA"/>
    <property type="match status" value="1"/>
</dbReference>
<dbReference type="Pfam" id="PF01628">
    <property type="entry name" value="HrcA"/>
    <property type="match status" value="1"/>
</dbReference>
<dbReference type="PIRSF" id="PIRSF005485">
    <property type="entry name" value="HrcA"/>
    <property type="match status" value="1"/>
</dbReference>
<dbReference type="SUPFAM" id="SSF55781">
    <property type="entry name" value="GAF domain-like"/>
    <property type="match status" value="1"/>
</dbReference>
<dbReference type="SUPFAM" id="SSF46785">
    <property type="entry name" value="Winged helix' DNA-binding domain"/>
    <property type="match status" value="1"/>
</dbReference>
<keyword id="KW-0678">Repressor</keyword>
<keyword id="KW-0346">Stress response</keyword>
<keyword id="KW-0804">Transcription</keyword>
<keyword id="KW-0805">Transcription regulation</keyword>
<comment type="function">
    <text evidence="1">Negative regulator of class I heat shock genes (grpE-dnaK-dnaJ and groELS operons). Prevents heat-shock induction of these operons.</text>
</comment>
<comment type="similarity">
    <text evidence="1">Belongs to the HrcA family.</text>
</comment>
<evidence type="ECO:0000255" key="1">
    <source>
        <dbReference type="HAMAP-Rule" id="MF_00081"/>
    </source>
</evidence>
<accession>A8Z4C1</accession>
<reference key="1">
    <citation type="journal article" date="2007" name="BMC Microbiol.">
        <title>Subtle genetic changes enhance virulence of methicillin resistant and sensitive Staphylococcus aureus.</title>
        <authorList>
            <person name="Highlander S.K."/>
            <person name="Hulten K.G."/>
            <person name="Qin X."/>
            <person name="Jiang H."/>
            <person name="Yerrapragada S."/>
            <person name="Mason E.O. Jr."/>
            <person name="Shang Y."/>
            <person name="Williams T.M."/>
            <person name="Fortunov R.M."/>
            <person name="Liu Y."/>
            <person name="Igboeli O."/>
            <person name="Petrosino J."/>
            <person name="Tirumalai M."/>
            <person name="Uzman A."/>
            <person name="Fox G.E."/>
            <person name="Cardenas A.M."/>
            <person name="Muzny D.M."/>
            <person name="Hemphill L."/>
            <person name="Ding Y."/>
            <person name="Dugan S."/>
            <person name="Blyth P.R."/>
            <person name="Buhay C.J."/>
            <person name="Dinh H.H."/>
            <person name="Hawes A.C."/>
            <person name="Holder M."/>
            <person name="Kovar C.L."/>
            <person name="Lee S.L."/>
            <person name="Liu W."/>
            <person name="Nazareth L.V."/>
            <person name="Wang Q."/>
            <person name="Zhou J."/>
            <person name="Kaplan S.L."/>
            <person name="Weinstock G.M."/>
        </authorList>
    </citation>
    <scope>NUCLEOTIDE SEQUENCE [LARGE SCALE GENOMIC DNA]</scope>
    <source>
        <strain>USA300 / TCH1516</strain>
    </source>
</reference>
<name>HRCA_STAAT</name>
<feature type="chain" id="PRO_1000075296" description="Heat-inducible transcription repressor HrcA">
    <location>
        <begin position="1"/>
        <end position="325"/>
    </location>
</feature>
<proteinExistence type="inferred from homology"/>
<organism>
    <name type="scientific">Staphylococcus aureus (strain USA300 / TCH1516)</name>
    <dbReference type="NCBI Taxonomy" id="451516"/>
    <lineage>
        <taxon>Bacteria</taxon>
        <taxon>Bacillati</taxon>
        <taxon>Bacillota</taxon>
        <taxon>Bacilli</taxon>
        <taxon>Bacillales</taxon>
        <taxon>Staphylococcaceae</taxon>
        <taxon>Staphylococcus</taxon>
    </lineage>
</organism>